<gene>
    <name type="primary">hemC</name>
</gene>
<sequence length="183" mass="20034">MLDKIIRIATRQSPLALWQAHYVQHLLQANHPGLQVELVPMVTRGDIILDTPLAKVGGKGLFVKELELALLDGRADIAVHSMKDVPVAFPEGLGLVTICEPDDPRDAFVSPHFAHIDDLPAGSIVGNSSLRRQCQLRERRPDLIIRDLRGNVGTRLAKLDNGDYHAIILAVAGLNRLGLASRI</sequence>
<feature type="chain" id="PRO_0000143014" description="Porphobilinogen deaminase">
    <location>
        <begin position="1"/>
        <end position="183" status="greater than"/>
    </location>
</feature>
<feature type="non-terminal residue">
    <location>
        <position position="183"/>
    </location>
</feature>
<dbReference type="EC" id="2.5.1.61"/>
<dbReference type="EMBL" id="X66781">
    <property type="protein sequence ID" value="CAA47276.1"/>
    <property type="molecule type" value="Genomic_DNA"/>
</dbReference>
<dbReference type="PIR" id="S24980">
    <property type="entry name" value="S24980"/>
</dbReference>
<dbReference type="SMR" id="P30527"/>
<dbReference type="STRING" id="631.CH53_1992"/>
<dbReference type="eggNOG" id="COG0181">
    <property type="taxonomic scope" value="Bacteria"/>
</dbReference>
<dbReference type="UniPathway" id="UPA00251">
    <property type="reaction ID" value="UER00319"/>
</dbReference>
<dbReference type="GO" id="GO:0005737">
    <property type="term" value="C:cytoplasm"/>
    <property type="evidence" value="ECO:0007669"/>
    <property type="project" value="TreeGrafter"/>
</dbReference>
<dbReference type="GO" id="GO:0004418">
    <property type="term" value="F:hydroxymethylbilane synthase activity"/>
    <property type="evidence" value="ECO:0007669"/>
    <property type="project" value="UniProtKB-EC"/>
</dbReference>
<dbReference type="GO" id="GO:0006782">
    <property type="term" value="P:protoporphyrinogen IX biosynthetic process"/>
    <property type="evidence" value="ECO:0007669"/>
    <property type="project" value="UniProtKB-UniPathway"/>
</dbReference>
<dbReference type="FunFam" id="3.40.190.10:FF:000004">
    <property type="entry name" value="Porphobilinogen deaminase"/>
    <property type="match status" value="1"/>
</dbReference>
<dbReference type="FunFam" id="3.40.190.10:FF:000005">
    <property type="entry name" value="Porphobilinogen deaminase"/>
    <property type="match status" value="1"/>
</dbReference>
<dbReference type="Gene3D" id="3.40.190.10">
    <property type="entry name" value="Periplasmic binding protein-like II"/>
    <property type="match status" value="2"/>
</dbReference>
<dbReference type="InterPro" id="IPR000860">
    <property type="entry name" value="HemC"/>
</dbReference>
<dbReference type="InterPro" id="IPR022417">
    <property type="entry name" value="Porphobilin_deaminase_N"/>
</dbReference>
<dbReference type="NCBIfam" id="TIGR00212">
    <property type="entry name" value="hemC"/>
    <property type="match status" value="1"/>
</dbReference>
<dbReference type="PANTHER" id="PTHR11557">
    <property type="entry name" value="PORPHOBILINOGEN DEAMINASE"/>
    <property type="match status" value="1"/>
</dbReference>
<dbReference type="PANTHER" id="PTHR11557:SF0">
    <property type="entry name" value="PORPHOBILINOGEN DEAMINASE"/>
    <property type="match status" value="1"/>
</dbReference>
<dbReference type="Pfam" id="PF01379">
    <property type="entry name" value="Porphobil_deam"/>
    <property type="match status" value="1"/>
</dbReference>
<dbReference type="PRINTS" id="PR00151">
    <property type="entry name" value="PORPHBDMNASE"/>
</dbReference>
<dbReference type="SUPFAM" id="SSF53850">
    <property type="entry name" value="Periplasmic binding protein-like II"/>
    <property type="match status" value="1"/>
</dbReference>
<comment type="function">
    <text evidence="1">Tetrapolymerization of the monopyrrole PBG into the hydroxymethylbilane pre-uroporphyrinogen in several discrete steps.</text>
</comment>
<comment type="catalytic activity">
    <reaction>
        <text>4 porphobilinogen + H2O = hydroxymethylbilane + 4 NH4(+)</text>
        <dbReference type="Rhea" id="RHEA:13185"/>
        <dbReference type="ChEBI" id="CHEBI:15377"/>
        <dbReference type="ChEBI" id="CHEBI:28938"/>
        <dbReference type="ChEBI" id="CHEBI:57845"/>
        <dbReference type="ChEBI" id="CHEBI:58126"/>
        <dbReference type="EC" id="2.5.1.61"/>
    </reaction>
</comment>
<comment type="cofactor">
    <cofactor>
        <name>dipyrromethane</name>
        <dbReference type="ChEBI" id="CHEBI:60342"/>
    </cofactor>
    <text>Binds 1 dipyrromethane group covalently.</text>
</comment>
<comment type="pathway">
    <text>Porphyrin-containing compound metabolism; protoporphyrin-IX biosynthesis; coproporphyrinogen-III from 5-aminolevulinate: step 2/4.</text>
</comment>
<comment type="subunit">
    <text>Monomer.</text>
</comment>
<comment type="miscellaneous">
    <text evidence="1">The porphobilinogen subunits are added to the dipyrromethane group.</text>
</comment>
<comment type="similarity">
    <text evidence="2">Belongs to the HMBS family.</text>
</comment>
<name>HEM3_YERIN</name>
<organism>
    <name type="scientific">Yersinia intermedia</name>
    <dbReference type="NCBI Taxonomy" id="631"/>
    <lineage>
        <taxon>Bacteria</taxon>
        <taxon>Pseudomonadati</taxon>
        <taxon>Pseudomonadota</taxon>
        <taxon>Gammaproteobacteria</taxon>
        <taxon>Enterobacterales</taxon>
        <taxon>Yersiniaceae</taxon>
        <taxon>Yersinia</taxon>
    </lineage>
</organism>
<evidence type="ECO:0000250" key="1"/>
<evidence type="ECO:0000305" key="2"/>
<proteinExistence type="inferred from homology"/>
<reference key="1">
    <citation type="journal article" date="1996" name="Biochimie">
        <title>Comparative analysis of the cya locus in enterobacteria and related Gram-negative facultative anaerobes.</title>
        <authorList>
            <person name="Trotot P."/>
            <person name="Sismeiro O."/>
            <person name="Vivares C."/>
            <person name="Glaser P."/>
            <person name="Bresson-Roy A."/>
            <person name="Danchin A."/>
        </authorList>
    </citation>
    <scope>NUCLEOTIDE SEQUENCE [GENOMIC DNA]</scope>
</reference>
<accession>P30527</accession>
<protein>
    <recommendedName>
        <fullName>Porphobilinogen deaminase</fullName>
        <shortName>PBG</shortName>
        <ecNumber>2.5.1.61</ecNumber>
    </recommendedName>
    <alternativeName>
        <fullName>Hydroxymethylbilane synthase</fullName>
        <shortName>HMBS</shortName>
    </alternativeName>
    <alternativeName>
        <fullName>Pre-uroporphyrinogen synthase</fullName>
    </alternativeName>
</protein>
<keyword id="KW-0627">Porphyrin biosynthesis</keyword>
<keyword id="KW-0808">Transferase</keyword>